<comment type="function">
    <text evidence="1">Bifunctional enzyme that catalyzes the formation of 4-diphosphocytidyl-2-C-methyl-D-erythritol from CTP and 2-C-methyl-D-erythritol 4-phosphate (MEP) (IspD), and catalyzes the conversion of 4-diphosphocytidyl-2-C-methyl-D-erythritol 2-phosphate (CDP-ME2P) to 2-C-methyl-D-erythritol 2,4-cyclodiphosphate (ME-CPP) with a corresponding release of cytidine 5-monophosphate (CMP) (IspF).</text>
</comment>
<comment type="catalytic activity">
    <reaction evidence="1">
        <text>2-C-methyl-D-erythritol 4-phosphate + CTP + H(+) = 4-CDP-2-C-methyl-D-erythritol + diphosphate</text>
        <dbReference type="Rhea" id="RHEA:13429"/>
        <dbReference type="ChEBI" id="CHEBI:15378"/>
        <dbReference type="ChEBI" id="CHEBI:33019"/>
        <dbReference type="ChEBI" id="CHEBI:37563"/>
        <dbReference type="ChEBI" id="CHEBI:57823"/>
        <dbReference type="ChEBI" id="CHEBI:58262"/>
        <dbReference type="EC" id="2.7.7.60"/>
    </reaction>
</comment>
<comment type="catalytic activity">
    <reaction evidence="1">
        <text>4-CDP-2-C-methyl-D-erythritol 2-phosphate = 2-C-methyl-D-erythritol 2,4-cyclic diphosphate + CMP</text>
        <dbReference type="Rhea" id="RHEA:23864"/>
        <dbReference type="ChEBI" id="CHEBI:57919"/>
        <dbReference type="ChEBI" id="CHEBI:58483"/>
        <dbReference type="ChEBI" id="CHEBI:60377"/>
        <dbReference type="EC" id="4.6.1.12"/>
    </reaction>
</comment>
<comment type="cofactor">
    <cofactor evidence="1">
        <name>a divalent metal cation</name>
        <dbReference type="ChEBI" id="CHEBI:60240"/>
    </cofactor>
</comment>
<comment type="pathway">
    <text evidence="1">Isoprenoid biosynthesis; isopentenyl diphosphate biosynthesis via DXP pathway; isopentenyl diphosphate from 1-deoxy-D-xylulose 5-phosphate: step 2/6.</text>
</comment>
<comment type="pathway">
    <text evidence="1">Isoprenoid biosynthesis; isopentenyl diphosphate biosynthesis via DXP pathway; isopentenyl diphosphate from 1-deoxy-D-xylulose 5-phosphate: step 4/6.</text>
</comment>
<comment type="similarity">
    <text evidence="1">In the N-terminal section; belongs to the IspD/TarI cytidylyltransferase family. IspD subfamily.</text>
</comment>
<comment type="similarity">
    <text evidence="1">In the C-terminal section; belongs to the IspF family.</text>
</comment>
<sequence>MHTWALLLAAGQSSRIAAACPGVRKQFLLWQNAPLFWHSAVMLSRVSRMRGIIFVFPEDMLEEATAMVRELDAGRALGIPWKAVSGGARRQDSVASGLGQLPAECDTVLVHDAARPFASASLTNSILDALQAGAEGVVPALAVTDTIKVVEDGAVLSTPDRTKLVAVQTPQGFSLQALLGAHRHCAEKALAVTDDASMLELLGQHTVITVEGEASNIKVTHPEDLTMLHSSEKKNMQVPCVGWGYDVHRFGSDGRPMKLGGVPIAGGPGVIAHSDGDVLLHALTDAVLGCMGLGDIGMLFPDTDAAYDNADSAVMLNEVLEKARNAGLLITHVDLTIITQIPRITPWRDQIHKNICRITRLDASSVNLKATTEEKLGFTGEKKGIKAVAAVTALRRVSS</sequence>
<proteinExistence type="inferred from homology"/>
<accession>Q310X3</accession>
<gene>
    <name evidence="1" type="primary">ispDF</name>
    <name type="ordered locus">Dde_1726</name>
</gene>
<name>ISPDF_OLEA2</name>
<protein>
    <recommendedName>
        <fullName evidence="1">Bifunctional enzyme IspD/IspF</fullName>
    </recommendedName>
    <domain>
        <recommendedName>
            <fullName evidence="1">2-C-methyl-D-erythritol 4-phosphate cytidylyltransferase</fullName>
            <ecNumber evidence="1">2.7.7.60</ecNumber>
        </recommendedName>
        <alternativeName>
            <fullName evidence="1">4-diphosphocytidyl-2C-methyl-D-erythritol synthase</fullName>
        </alternativeName>
        <alternativeName>
            <fullName evidence="1">MEP cytidylyltransferase</fullName>
            <shortName evidence="1">MCT</shortName>
        </alternativeName>
    </domain>
    <domain>
        <recommendedName>
            <fullName evidence="1">2-C-methyl-D-erythritol 2,4-cyclodiphosphate synthase</fullName>
            <shortName evidence="1">MECDP-synthase</shortName>
            <shortName evidence="1">MECPP-synthase</shortName>
            <shortName evidence="1">MECPS</shortName>
            <ecNumber evidence="1">4.6.1.12</ecNumber>
        </recommendedName>
    </domain>
</protein>
<evidence type="ECO:0000255" key="1">
    <source>
        <dbReference type="HAMAP-Rule" id="MF_01520"/>
    </source>
</evidence>
<feature type="chain" id="PRO_0000296743" description="Bifunctional enzyme IspD/IspF">
    <location>
        <begin position="1"/>
        <end position="399"/>
    </location>
</feature>
<feature type="region of interest" description="2-C-methyl-D-erythritol 4-phosphate cytidylyltransferase" evidence="1">
    <location>
        <begin position="1"/>
        <end position="239"/>
    </location>
</feature>
<feature type="region of interest" description="2-C-methyl-D-erythritol 2,4-cyclodiphosphate synthase" evidence="1">
    <location>
        <begin position="240"/>
        <end position="399"/>
    </location>
</feature>
<feature type="binding site" evidence="1">
    <location>
        <begin position="246"/>
        <end position="248"/>
    </location>
    <ligand>
        <name>4-CDP-2-C-methyl-D-erythritol 2-phosphate</name>
        <dbReference type="ChEBI" id="CHEBI:57919"/>
    </ligand>
</feature>
<feature type="binding site" evidence="1">
    <location>
        <position position="246"/>
    </location>
    <ligand>
        <name>a divalent metal cation</name>
        <dbReference type="ChEBI" id="CHEBI:60240"/>
    </ligand>
</feature>
<feature type="binding site" evidence="1">
    <location>
        <position position="248"/>
    </location>
    <ligand>
        <name>a divalent metal cation</name>
        <dbReference type="ChEBI" id="CHEBI:60240"/>
    </ligand>
</feature>
<feature type="binding site" evidence="1">
    <location>
        <begin position="273"/>
        <end position="274"/>
    </location>
    <ligand>
        <name>4-CDP-2-C-methyl-D-erythritol 2-phosphate</name>
        <dbReference type="ChEBI" id="CHEBI:57919"/>
    </ligand>
</feature>
<feature type="binding site" evidence="1">
    <location>
        <position position="281"/>
    </location>
    <ligand>
        <name>a divalent metal cation</name>
        <dbReference type="ChEBI" id="CHEBI:60240"/>
    </ligand>
</feature>
<feature type="binding site" evidence="1">
    <location>
        <begin position="295"/>
        <end position="297"/>
    </location>
    <ligand>
        <name>4-CDP-2-C-methyl-D-erythritol 2-phosphate</name>
        <dbReference type="ChEBI" id="CHEBI:57919"/>
    </ligand>
</feature>
<feature type="binding site" evidence="1">
    <location>
        <begin position="300"/>
        <end position="304"/>
    </location>
    <ligand>
        <name>4-CDP-2-C-methyl-D-erythritol 2-phosphate</name>
        <dbReference type="ChEBI" id="CHEBI:57919"/>
    </ligand>
</feature>
<feature type="binding site" evidence="1">
    <location>
        <begin position="371"/>
        <end position="374"/>
    </location>
    <ligand>
        <name>4-CDP-2-C-methyl-D-erythritol 2-phosphate</name>
        <dbReference type="ChEBI" id="CHEBI:57919"/>
    </ligand>
</feature>
<feature type="binding site" evidence="1">
    <location>
        <position position="378"/>
    </location>
    <ligand>
        <name>4-CDP-2-C-methyl-D-erythritol 2-phosphate</name>
        <dbReference type="ChEBI" id="CHEBI:57919"/>
    </ligand>
</feature>
<feature type="site" description="Transition state stabilizer" evidence="1">
    <location>
        <position position="15"/>
    </location>
</feature>
<feature type="site" description="Transition state stabilizer" evidence="1">
    <location>
        <position position="25"/>
    </location>
</feature>
<feature type="site" description="Positions MEP for the nucleophilic attack" evidence="1">
    <location>
        <position position="161"/>
    </location>
</feature>
<feature type="site" description="Positions MEP for the nucleophilic attack" evidence="1">
    <location>
        <position position="218"/>
    </location>
</feature>
<feature type="site" description="Transition state stabilizer" evidence="1">
    <location>
        <position position="273"/>
    </location>
</feature>
<feature type="site" description="Transition state stabilizer" evidence="1">
    <location>
        <position position="372"/>
    </location>
</feature>
<keyword id="KW-0414">Isoprene biosynthesis</keyword>
<keyword id="KW-0456">Lyase</keyword>
<keyword id="KW-0479">Metal-binding</keyword>
<keyword id="KW-0511">Multifunctional enzyme</keyword>
<keyword id="KW-0548">Nucleotidyltransferase</keyword>
<keyword id="KW-1185">Reference proteome</keyword>
<keyword id="KW-0808">Transferase</keyword>
<organism>
    <name type="scientific">Oleidesulfovibrio alaskensis (strain ATCC BAA-1058 / DSM 17464 / G20)</name>
    <name type="common">Desulfovibrio alaskensis</name>
    <dbReference type="NCBI Taxonomy" id="207559"/>
    <lineage>
        <taxon>Bacteria</taxon>
        <taxon>Pseudomonadati</taxon>
        <taxon>Thermodesulfobacteriota</taxon>
        <taxon>Desulfovibrionia</taxon>
        <taxon>Desulfovibrionales</taxon>
        <taxon>Desulfovibrionaceae</taxon>
        <taxon>Oleidesulfovibrio</taxon>
    </lineage>
</organism>
<dbReference type="EC" id="2.7.7.60" evidence="1"/>
<dbReference type="EC" id="4.6.1.12" evidence="1"/>
<dbReference type="EMBL" id="CP000112">
    <property type="protein sequence ID" value="ABB38523.1"/>
    <property type="molecule type" value="Genomic_DNA"/>
</dbReference>
<dbReference type="RefSeq" id="WP_011367665.1">
    <property type="nucleotide sequence ID" value="NC_007519.1"/>
</dbReference>
<dbReference type="SMR" id="Q310X3"/>
<dbReference type="STRING" id="207559.Dde_1726"/>
<dbReference type="KEGG" id="dde:Dde_1726"/>
<dbReference type="eggNOG" id="COG0245">
    <property type="taxonomic scope" value="Bacteria"/>
</dbReference>
<dbReference type="eggNOG" id="COG1211">
    <property type="taxonomic scope" value="Bacteria"/>
</dbReference>
<dbReference type="HOGENOM" id="CLU_042800_2_6_7"/>
<dbReference type="UniPathway" id="UPA00056">
    <property type="reaction ID" value="UER00093"/>
</dbReference>
<dbReference type="UniPathway" id="UPA00056">
    <property type="reaction ID" value="UER00095"/>
</dbReference>
<dbReference type="Proteomes" id="UP000002710">
    <property type="component" value="Chromosome"/>
</dbReference>
<dbReference type="GO" id="GO:0008685">
    <property type="term" value="F:2-C-methyl-D-erythritol 2,4-cyclodiphosphate synthase activity"/>
    <property type="evidence" value="ECO:0007669"/>
    <property type="project" value="UniProtKB-UniRule"/>
</dbReference>
<dbReference type="GO" id="GO:0050518">
    <property type="term" value="F:2-C-methyl-D-erythritol 4-phosphate cytidylyltransferase activity"/>
    <property type="evidence" value="ECO:0007669"/>
    <property type="project" value="UniProtKB-UniRule"/>
</dbReference>
<dbReference type="GO" id="GO:0046872">
    <property type="term" value="F:metal ion binding"/>
    <property type="evidence" value="ECO:0007669"/>
    <property type="project" value="UniProtKB-KW"/>
</dbReference>
<dbReference type="GO" id="GO:0019288">
    <property type="term" value="P:isopentenyl diphosphate biosynthetic process, methylerythritol 4-phosphate pathway"/>
    <property type="evidence" value="ECO:0007669"/>
    <property type="project" value="UniProtKB-UniRule"/>
</dbReference>
<dbReference type="GO" id="GO:0016114">
    <property type="term" value="P:terpenoid biosynthetic process"/>
    <property type="evidence" value="ECO:0007669"/>
    <property type="project" value="InterPro"/>
</dbReference>
<dbReference type="CDD" id="cd02516">
    <property type="entry name" value="CDP-ME_synthetase"/>
    <property type="match status" value="1"/>
</dbReference>
<dbReference type="CDD" id="cd00554">
    <property type="entry name" value="MECDP_synthase"/>
    <property type="match status" value="1"/>
</dbReference>
<dbReference type="Gene3D" id="3.30.1330.50">
    <property type="entry name" value="2-C-methyl-D-erythritol 2,4-cyclodiphosphate synthase"/>
    <property type="match status" value="1"/>
</dbReference>
<dbReference type="Gene3D" id="3.90.550.10">
    <property type="entry name" value="Spore Coat Polysaccharide Biosynthesis Protein SpsA, Chain A"/>
    <property type="match status" value="1"/>
</dbReference>
<dbReference type="HAMAP" id="MF_01520">
    <property type="entry name" value="IspDF"/>
    <property type="match status" value="1"/>
</dbReference>
<dbReference type="HAMAP" id="MF_00107">
    <property type="entry name" value="IspF"/>
    <property type="match status" value="1"/>
</dbReference>
<dbReference type="InterPro" id="IPR001228">
    <property type="entry name" value="IspD"/>
</dbReference>
<dbReference type="InterPro" id="IPR026596">
    <property type="entry name" value="IspD/F"/>
</dbReference>
<dbReference type="InterPro" id="IPR034683">
    <property type="entry name" value="IspD/TarI"/>
</dbReference>
<dbReference type="InterPro" id="IPR018294">
    <property type="entry name" value="ISPD_synthase_CS"/>
</dbReference>
<dbReference type="InterPro" id="IPR003526">
    <property type="entry name" value="MECDP_synthase"/>
</dbReference>
<dbReference type="InterPro" id="IPR020555">
    <property type="entry name" value="MECDP_synthase_CS"/>
</dbReference>
<dbReference type="InterPro" id="IPR036571">
    <property type="entry name" value="MECDP_synthase_sf"/>
</dbReference>
<dbReference type="InterPro" id="IPR029044">
    <property type="entry name" value="Nucleotide-diphossugar_trans"/>
</dbReference>
<dbReference type="NCBIfam" id="TIGR00453">
    <property type="entry name" value="ispD"/>
    <property type="match status" value="1"/>
</dbReference>
<dbReference type="NCBIfam" id="TIGR00151">
    <property type="entry name" value="ispF"/>
    <property type="match status" value="1"/>
</dbReference>
<dbReference type="PANTHER" id="PTHR43181">
    <property type="entry name" value="2-C-METHYL-D-ERYTHRITOL 2,4-CYCLODIPHOSPHATE SYNTHASE, CHLOROPLASTIC"/>
    <property type="match status" value="1"/>
</dbReference>
<dbReference type="PANTHER" id="PTHR43181:SF1">
    <property type="entry name" value="2-C-METHYL-D-ERYTHRITOL 2,4-CYCLODIPHOSPHATE SYNTHASE, CHLOROPLASTIC"/>
    <property type="match status" value="1"/>
</dbReference>
<dbReference type="Pfam" id="PF01128">
    <property type="entry name" value="IspD"/>
    <property type="match status" value="1"/>
</dbReference>
<dbReference type="Pfam" id="PF02542">
    <property type="entry name" value="YgbB"/>
    <property type="match status" value="1"/>
</dbReference>
<dbReference type="SUPFAM" id="SSF69765">
    <property type="entry name" value="IpsF-like"/>
    <property type="match status" value="1"/>
</dbReference>
<dbReference type="SUPFAM" id="SSF53448">
    <property type="entry name" value="Nucleotide-diphospho-sugar transferases"/>
    <property type="match status" value="1"/>
</dbReference>
<dbReference type="PROSITE" id="PS01295">
    <property type="entry name" value="ISPD"/>
    <property type="match status" value="1"/>
</dbReference>
<dbReference type="PROSITE" id="PS01350">
    <property type="entry name" value="ISPF"/>
    <property type="match status" value="1"/>
</dbReference>
<reference key="1">
    <citation type="journal article" date="2011" name="J. Bacteriol.">
        <title>Complete genome sequence and updated annotation of Desulfovibrio alaskensis G20.</title>
        <authorList>
            <person name="Hauser L.J."/>
            <person name="Land M.L."/>
            <person name="Brown S.D."/>
            <person name="Larimer F."/>
            <person name="Keller K.L."/>
            <person name="Rapp-Giles B.J."/>
            <person name="Price M.N."/>
            <person name="Lin M."/>
            <person name="Bruce D.C."/>
            <person name="Detter J.C."/>
            <person name="Tapia R."/>
            <person name="Han C.S."/>
            <person name="Goodwin L.A."/>
            <person name="Cheng J.F."/>
            <person name="Pitluck S."/>
            <person name="Copeland A."/>
            <person name="Lucas S."/>
            <person name="Nolan M."/>
            <person name="Lapidus A.L."/>
            <person name="Palumbo A.V."/>
            <person name="Wall J.D."/>
        </authorList>
    </citation>
    <scope>NUCLEOTIDE SEQUENCE [LARGE SCALE GENOMIC DNA]</scope>
    <source>
        <strain>ATCC BAA-1058 / DSM 17464 / G20</strain>
    </source>
</reference>